<keyword id="KW-0067">ATP-binding</keyword>
<keyword id="KW-0315">Glutamine amidotransferase</keyword>
<keyword id="KW-0332">GMP biosynthesis</keyword>
<keyword id="KW-0436">Ligase</keyword>
<keyword id="KW-0547">Nucleotide-binding</keyword>
<keyword id="KW-0658">Purine biosynthesis</keyword>
<sequence length="518" mass="57267">MDTSHSDTVLIIDFGSQVTQLIARRVRAMGVYSEIVPFQSALGGINRIKPKAVILSGSPYSTLDNGSPRAPIEVFEAGIPVLGICYGQQVMCVQLGGKVEAGHEREFGRAFLEIKEESALFDGVWEKGSSQQVWMSHGDRVTALPEGFCVIGTSKGAPYAAISDEKRNFYAVQFHPEVVHTPDGEKLLQNFVCKISGIKNNWSMAAYRDQAIAAIREKVGKNRVICGLSGGVDSSVTAVLLHEAIGDQLTCIFVDHGLIRKNEAEEVLKLFRDNYNIELIHVNAADMFINALEGETDPEKKRKTIGRLFIEVFEEETKKIGGAKFLAQGTLYPDVIESVSAIGEAITIKSHHNVGGLPERMNMKLVEPLRELFKDDVRSLGRELGLPEEFIKRHPFPGPGLAIRCPGAVTREKIEILREADAIYLDEIRKAGLYDKIWQAFAILLPVQTVGVMGDGRTYEFVCALRAVTSVDGMTADFYPHDMDFLSRTAARIINEVRGINRVVYDITSKPPGTIEWE</sequence>
<proteinExistence type="inferred from homology"/>
<accession>A1URR0</accession>
<protein>
    <recommendedName>
        <fullName evidence="1">GMP synthase [glutamine-hydrolyzing]</fullName>
        <ecNumber evidence="1">6.3.5.2</ecNumber>
    </recommendedName>
    <alternativeName>
        <fullName evidence="1">GMP synthetase</fullName>
    </alternativeName>
    <alternativeName>
        <fullName evidence="1">Glutamine amidotransferase</fullName>
    </alternativeName>
</protein>
<comment type="function">
    <text evidence="1">Catalyzes the synthesis of GMP from XMP.</text>
</comment>
<comment type="catalytic activity">
    <reaction evidence="1">
        <text>XMP + L-glutamine + ATP + H2O = GMP + L-glutamate + AMP + diphosphate + 2 H(+)</text>
        <dbReference type="Rhea" id="RHEA:11680"/>
        <dbReference type="ChEBI" id="CHEBI:15377"/>
        <dbReference type="ChEBI" id="CHEBI:15378"/>
        <dbReference type="ChEBI" id="CHEBI:29985"/>
        <dbReference type="ChEBI" id="CHEBI:30616"/>
        <dbReference type="ChEBI" id="CHEBI:33019"/>
        <dbReference type="ChEBI" id="CHEBI:57464"/>
        <dbReference type="ChEBI" id="CHEBI:58115"/>
        <dbReference type="ChEBI" id="CHEBI:58359"/>
        <dbReference type="ChEBI" id="CHEBI:456215"/>
        <dbReference type="EC" id="6.3.5.2"/>
    </reaction>
</comment>
<comment type="pathway">
    <text evidence="1">Purine metabolism; GMP biosynthesis; GMP from XMP (L-Gln route): step 1/1.</text>
</comment>
<comment type="subunit">
    <text evidence="1">Homodimer.</text>
</comment>
<organism>
    <name type="scientific">Bartonella bacilliformis (strain ATCC 35685 / KC583 / Herrer 020/F12,63)</name>
    <dbReference type="NCBI Taxonomy" id="360095"/>
    <lineage>
        <taxon>Bacteria</taxon>
        <taxon>Pseudomonadati</taxon>
        <taxon>Pseudomonadota</taxon>
        <taxon>Alphaproteobacteria</taxon>
        <taxon>Hyphomicrobiales</taxon>
        <taxon>Bartonellaceae</taxon>
        <taxon>Bartonella</taxon>
    </lineage>
</organism>
<evidence type="ECO:0000255" key="1">
    <source>
        <dbReference type="HAMAP-Rule" id="MF_00344"/>
    </source>
</evidence>
<dbReference type="EC" id="6.3.5.2" evidence="1"/>
<dbReference type="EMBL" id="CP000524">
    <property type="protein sequence ID" value="ABM45387.1"/>
    <property type="molecule type" value="Genomic_DNA"/>
</dbReference>
<dbReference type="RefSeq" id="WP_005766286.1">
    <property type="nucleotide sequence ID" value="NC_008783.1"/>
</dbReference>
<dbReference type="SMR" id="A1URR0"/>
<dbReference type="STRING" id="360095.BARBAKC583_0344"/>
<dbReference type="MEROPS" id="C26.957"/>
<dbReference type="GeneID" id="4684092"/>
<dbReference type="KEGG" id="bbk:BARBAKC583_0344"/>
<dbReference type="PATRIC" id="fig|360095.6.peg.327"/>
<dbReference type="eggNOG" id="COG0518">
    <property type="taxonomic scope" value="Bacteria"/>
</dbReference>
<dbReference type="eggNOG" id="COG0519">
    <property type="taxonomic scope" value="Bacteria"/>
</dbReference>
<dbReference type="HOGENOM" id="CLU_014340_0_5_5"/>
<dbReference type="OrthoDB" id="9802219at2"/>
<dbReference type="UniPathway" id="UPA00189">
    <property type="reaction ID" value="UER00296"/>
</dbReference>
<dbReference type="Proteomes" id="UP000000643">
    <property type="component" value="Chromosome"/>
</dbReference>
<dbReference type="GO" id="GO:0005829">
    <property type="term" value="C:cytosol"/>
    <property type="evidence" value="ECO:0007669"/>
    <property type="project" value="TreeGrafter"/>
</dbReference>
<dbReference type="GO" id="GO:0005524">
    <property type="term" value="F:ATP binding"/>
    <property type="evidence" value="ECO:0007669"/>
    <property type="project" value="UniProtKB-UniRule"/>
</dbReference>
<dbReference type="GO" id="GO:0003921">
    <property type="term" value="F:GMP synthase activity"/>
    <property type="evidence" value="ECO:0007669"/>
    <property type="project" value="InterPro"/>
</dbReference>
<dbReference type="CDD" id="cd01742">
    <property type="entry name" value="GATase1_GMP_Synthase"/>
    <property type="match status" value="1"/>
</dbReference>
<dbReference type="CDD" id="cd01997">
    <property type="entry name" value="GMP_synthase_C"/>
    <property type="match status" value="1"/>
</dbReference>
<dbReference type="FunFam" id="3.30.300.10:FF:000002">
    <property type="entry name" value="GMP synthase [glutamine-hydrolyzing]"/>
    <property type="match status" value="1"/>
</dbReference>
<dbReference type="FunFam" id="3.40.50.620:FF:000001">
    <property type="entry name" value="GMP synthase [glutamine-hydrolyzing]"/>
    <property type="match status" value="1"/>
</dbReference>
<dbReference type="FunFam" id="3.40.50.880:FF:000001">
    <property type="entry name" value="GMP synthase [glutamine-hydrolyzing]"/>
    <property type="match status" value="1"/>
</dbReference>
<dbReference type="Gene3D" id="3.30.300.10">
    <property type="match status" value="1"/>
</dbReference>
<dbReference type="Gene3D" id="3.40.50.880">
    <property type="match status" value="1"/>
</dbReference>
<dbReference type="Gene3D" id="3.40.50.620">
    <property type="entry name" value="HUPs"/>
    <property type="match status" value="1"/>
</dbReference>
<dbReference type="HAMAP" id="MF_00344">
    <property type="entry name" value="GMP_synthase"/>
    <property type="match status" value="1"/>
</dbReference>
<dbReference type="InterPro" id="IPR029062">
    <property type="entry name" value="Class_I_gatase-like"/>
</dbReference>
<dbReference type="InterPro" id="IPR017926">
    <property type="entry name" value="GATASE"/>
</dbReference>
<dbReference type="InterPro" id="IPR001674">
    <property type="entry name" value="GMP_synth_C"/>
</dbReference>
<dbReference type="InterPro" id="IPR004739">
    <property type="entry name" value="GMP_synth_GATase"/>
</dbReference>
<dbReference type="InterPro" id="IPR022955">
    <property type="entry name" value="GMP_synthase"/>
</dbReference>
<dbReference type="InterPro" id="IPR025777">
    <property type="entry name" value="GMPS_ATP_PPase_dom"/>
</dbReference>
<dbReference type="InterPro" id="IPR022310">
    <property type="entry name" value="NAD/GMP_synthase"/>
</dbReference>
<dbReference type="InterPro" id="IPR014729">
    <property type="entry name" value="Rossmann-like_a/b/a_fold"/>
</dbReference>
<dbReference type="NCBIfam" id="TIGR00884">
    <property type="entry name" value="guaA_Cterm"/>
    <property type="match status" value="1"/>
</dbReference>
<dbReference type="NCBIfam" id="TIGR00888">
    <property type="entry name" value="guaA_Nterm"/>
    <property type="match status" value="1"/>
</dbReference>
<dbReference type="NCBIfam" id="NF000848">
    <property type="entry name" value="PRK00074.1"/>
    <property type="match status" value="1"/>
</dbReference>
<dbReference type="PANTHER" id="PTHR11922:SF2">
    <property type="entry name" value="GMP SYNTHASE [GLUTAMINE-HYDROLYZING]"/>
    <property type="match status" value="1"/>
</dbReference>
<dbReference type="PANTHER" id="PTHR11922">
    <property type="entry name" value="GMP SYNTHASE-RELATED"/>
    <property type="match status" value="1"/>
</dbReference>
<dbReference type="Pfam" id="PF00117">
    <property type="entry name" value="GATase"/>
    <property type="match status" value="1"/>
</dbReference>
<dbReference type="Pfam" id="PF00958">
    <property type="entry name" value="GMP_synt_C"/>
    <property type="match status" value="1"/>
</dbReference>
<dbReference type="Pfam" id="PF02540">
    <property type="entry name" value="NAD_synthase"/>
    <property type="match status" value="1"/>
</dbReference>
<dbReference type="PRINTS" id="PR00096">
    <property type="entry name" value="GATASE"/>
</dbReference>
<dbReference type="SUPFAM" id="SSF52402">
    <property type="entry name" value="Adenine nucleotide alpha hydrolases-like"/>
    <property type="match status" value="1"/>
</dbReference>
<dbReference type="SUPFAM" id="SSF52317">
    <property type="entry name" value="Class I glutamine amidotransferase-like"/>
    <property type="match status" value="1"/>
</dbReference>
<dbReference type="SUPFAM" id="SSF54810">
    <property type="entry name" value="GMP synthetase C-terminal dimerisation domain"/>
    <property type="match status" value="1"/>
</dbReference>
<dbReference type="PROSITE" id="PS51273">
    <property type="entry name" value="GATASE_TYPE_1"/>
    <property type="match status" value="1"/>
</dbReference>
<dbReference type="PROSITE" id="PS51553">
    <property type="entry name" value="GMPS_ATP_PPASE"/>
    <property type="match status" value="1"/>
</dbReference>
<gene>
    <name evidence="1" type="primary">guaA</name>
    <name type="ordered locus">BARBAKC583_0344</name>
</gene>
<feature type="chain" id="PRO_1000120221" description="GMP synthase [glutamine-hydrolyzing]">
    <location>
        <begin position="1"/>
        <end position="518"/>
    </location>
</feature>
<feature type="domain" description="Glutamine amidotransferase type-1" evidence="1">
    <location>
        <begin position="8"/>
        <end position="201"/>
    </location>
</feature>
<feature type="domain" description="GMPS ATP-PPase" evidence="1">
    <location>
        <begin position="202"/>
        <end position="393"/>
    </location>
</feature>
<feature type="active site" description="Nucleophile" evidence="1">
    <location>
        <position position="85"/>
    </location>
</feature>
<feature type="active site" evidence="1">
    <location>
        <position position="175"/>
    </location>
</feature>
<feature type="active site" evidence="1">
    <location>
        <position position="177"/>
    </location>
</feature>
<feature type="binding site" evidence="1">
    <location>
        <begin position="229"/>
        <end position="235"/>
    </location>
    <ligand>
        <name>ATP</name>
        <dbReference type="ChEBI" id="CHEBI:30616"/>
    </ligand>
</feature>
<reference key="1">
    <citation type="submission" date="2006-12" db="EMBL/GenBank/DDBJ databases">
        <authorList>
            <person name="Hendrix L."/>
            <person name="Mohamoud Y."/>
            <person name="Radune D."/>
            <person name="Shvartsbeyn A."/>
            <person name="Daugherty S."/>
            <person name="Dodson R."/>
            <person name="Durkin A.S."/>
            <person name="Harkins D."/>
            <person name="Huot H."/>
            <person name="Kothari S.P."/>
            <person name="Madupu R."/>
            <person name="Li J."/>
            <person name="Nelson W.C."/>
            <person name="Shrivastava S."/>
            <person name="Giglio M.G."/>
            <person name="Haft D."/>
            <person name="Selengut J."/>
            <person name="Fraser-Ligget C."/>
            <person name="Seshadri R."/>
        </authorList>
    </citation>
    <scope>NUCLEOTIDE SEQUENCE [LARGE SCALE GENOMIC DNA]</scope>
    <source>
        <strain>ATCC 35685 / KC583 / Herrer 020/F12,63</strain>
    </source>
</reference>
<name>GUAA_BARBK</name>